<accession>Q99PL5</accession>
<accession>A2AVJ8</accession>
<accession>Q99PK5</accession>
<accession>Q99PK6</accession>
<accession>Q99PK7</accession>
<accession>Q99PK8</accession>
<accession>Q99PK9</accession>
<accession>Q99PL0</accession>
<accession>Q99PL1</accession>
<accession>Q99PL2</accession>
<accession>Q99PL3</accession>
<accession>Q99PL4</accession>
<accession>Q9CS20</accession>
<keyword id="KW-0007">Acetylation</keyword>
<keyword id="KW-0025">Alternative splicing</keyword>
<keyword id="KW-0256">Endoplasmic reticulum</keyword>
<keyword id="KW-1017">Isopeptide bond</keyword>
<keyword id="KW-0472">Membrane</keyword>
<keyword id="KW-0597">Phosphoprotein</keyword>
<keyword id="KW-0653">Protein transport</keyword>
<keyword id="KW-1185">Reference proteome</keyword>
<keyword id="KW-0677">Repeat</keyword>
<keyword id="KW-0811">Translocation</keyword>
<keyword id="KW-0812">Transmembrane</keyword>
<keyword id="KW-1133">Transmembrane helix</keyword>
<keyword id="KW-0813">Transport</keyword>
<keyword id="KW-0832">Ubl conjugation</keyword>
<sequence>MDIYDTQTLGVVVFGGFMVVSAIGIFLVSTFSMKETSYEEALANQRKEMAKTHHQKGEKKKKEKTVEKKGKTKKKEEKPNGKIPEHDLDPNVTIILKEPVRVSAVAVAPTSVHSSVGHTPIATVPAMPQEKLASSPKDRKKKEKKVAKVEPAVSSIVNSIQVLASKSAILEATPKEVPMVAVPPVGSKASSPATSSQGKKGQGAQNQAKKGEGAQNQGKKGEGAQNQAKKGEGAQNQAKKGEGAQNQGKKGEGAQNQAKKGEGGQNQAKKGEGAQNQGKKGEGAQNQGKKGEGAQNQAKKGEGAQNQAKKGEGAQNQGKKGEGAQNQSKKGEGAQNQAKKGEGGQNQAKKGEGAQNQAKKGEGAQNQAKKGEGVQNQAKKGVEGAQNQGKKGEANQNQAKKGEGGQNQTKKGEGPQNQGKKGEAAQKQDKKIEGAQNQGKKPEGTSNQGKKGEGAQNQGKKGEGAQNQSKKGEGAQNQAKKGEGGQNQAKKGEGAQNQAKKGEGAQNQAKKGEGVQNQAKKGVEGAQNQGKKGEANQNQAKKGEGGQNQTKKGEGPQNQGKKGEAAQKQDKKIEGAQNQGKKPEGTSNQGKKGEGAQNQGKKGEGAQNQGKKGEGAQNQGKKGEGAQNQGKKGEGAQNQGKKGEGAQNQGKKGEGAQNQGKKGEGPQNQAKKGEGAQNQGKKGEGAQNQGKKGEGAQNQGKKAEGVQSQSKKGEGTQNQGKKGDGNPNQGKKGEGASNQNRKTDTVANQGTKQEGVSNQVKKSEGSPNQGKKAEGAPNQGKKKDGSPSQAKKVDAAANQGKKSEMAPAQGQKASMVQSQEAPKQDAPAKKKSGSRKKGEPGPPDCDGPLFLPYKTLVSTVGSMVFSEGEAQRLIEILSEKTGVIQDTWHKATQKGDPVAILKRQLQEKEKLLATEQEDAAVAKSKLRELNKEMASEKAKAAAGEAKVKKQLVAREQEIAAVQARMQASYRDHVKEVQQLQGKIRTLQEQLENGPNTQLARLQQENSILRDALNQATSQVESKQNTELAKLRQELSKVNKELVEKSEASRQEEQQRKALEAKAATFEKQVLQLQASHKESEEALQKRLEEVTRELCRAQTSHANLRADAEKAQEQQQRVAELHSKLQSSEVEVKSKCEELSSLHGQLKEARAENSQLTERIRSIEALLEAGQAQDTQASHAEANQQQTRLKELESQVSCLEKETSELKEAMEQQKGKNNDLREKNWKAMEALALAERACEEKLRSLTQAKEESEKQLHLAEAQTKETLLALLPGLSISAHQNYAEWLQEFKEKGSELLKKPPTLEPSMDIVLKLREAEETQNSLQAECDQYRTILAETEGMLKDLQKSVEEEERVWKAKVGAAEEELHKSRVTVKHLEDIVEKLKGELESSDQVREHTSHLEAELEKHMAAASAECQNYAKEVAGLRQLLLESQSQLDEAKSEAQKQSDELALVRQQLSDMRSHVEDGDVAGSPAVPPAEQDPMKLKTQLERTEATLEAEQTRRQKLTAEFEEAQRTACRIQEELEKLRAAGPLESSGKEEITQLKERLEKEKRLTSDLGRAAIKLQELLKTTQEQLTKEKDTVKKLQEQLGKAEDGSSSKEGTSV</sequence>
<proteinExistence type="evidence at protein level"/>
<gene>
    <name type="primary">Rrbp1</name>
</gene>
<evidence type="ECO:0000250" key="1"/>
<evidence type="ECO:0000250" key="2">
    <source>
        <dbReference type="UniProtKB" id="Q9P2E9"/>
    </source>
</evidence>
<evidence type="ECO:0000255" key="3"/>
<evidence type="ECO:0000256" key="4">
    <source>
        <dbReference type="SAM" id="MobiDB-lite"/>
    </source>
</evidence>
<evidence type="ECO:0000269" key="5">
    <source>
    </source>
</evidence>
<evidence type="ECO:0000303" key="6">
    <source>
    </source>
</evidence>
<evidence type="ECO:0000303" key="7">
    <source>
    </source>
</evidence>
<evidence type="ECO:0000305" key="8"/>
<evidence type="ECO:0007744" key="9">
    <source>
    </source>
</evidence>
<evidence type="ECO:0007744" key="10">
    <source>
    </source>
</evidence>
<protein>
    <recommendedName>
        <fullName>Ribosome-binding protein 1</fullName>
    </recommendedName>
    <alternativeName>
        <fullName>Ribosome receptor protein</fullName>
        <shortName>RRp</shortName>
        <shortName>mRRp</shortName>
    </alternativeName>
</protein>
<feature type="chain" id="PRO_0000097442" description="Ribosome-binding protein 1">
    <location>
        <begin position="1"/>
        <end position="1605"/>
    </location>
</feature>
<feature type="topological domain" description="Lumenal" evidence="3">
    <location>
        <begin position="1"/>
        <end position="7"/>
    </location>
</feature>
<feature type="transmembrane region" description="Helical" evidence="3">
    <location>
        <begin position="8"/>
        <end position="28"/>
    </location>
</feature>
<feature type="topological domain" description="Cytoplasmic" evidence="3">
    <location>
        <begin position="29"/>
        <end position="1605"/>
    </location>
</feature>
<feature type="repeat" description="1">
    <location>
        <begin position="196"/>
        <end position="205"/>
    </location>
</feature>
<feature type="repeat" description="2">
    <location>
        <begin position="206"/>
        <end position="215"/>
    </location>
</feature>
<feature type="repeat" description="3">
    <location>
        <begin position="216"/>
        <end position="225"/>
    </location>
</feature>
<feature type="repeat" description="4">
    <location>
        <begin position="226"/>
        <end position="235"/>
    </location>
</feature>
<feature type="repeat" description="5">
    <location>
        <begin position="236"/>
        <end position="245"/>
    </location>
</feature>
<feature type="repeat" description="6">
    <location>
        <begin position="246"/>
        <end position="255"/>
    </location>
</feature>
<feature type="repeat" description="7">
    <location>
        <begin position="256"/>
        <end position="265"/>
    </location>
</feature>
<feature type="repeat" description="8">
    <location>
        <begin position="266"/>
        <end position="275"/>
    </location>
</feature>
<feature type="repeat" description="9">
    <location>
        <begin position="276"/>
        <end position="285"/>
    </location>
</feature>
<feature type="repeat" description="10">
    <location>
        <begin position="286"/>
        <end position="295"/>
    </location>
</feature>
<feature type="repeat" description="11">
    <location>
        <begin position="296"/>
        <end position="305"/>
    </location>
</feature>
<feature type="repeat" description="12">
    <location>
        <begin position="306"/>
        <end position="315"/>
    </location>
</feature>
<feature type="repeat" description="13">
    <location>
        <begin position="316"/>
        <end position="325"/>
    </location>
</feature>
<feature type="repeat" description="14">
    <location>
        <begin position="326"/>
        <end position="335"/>
    </location>
</feature>
<feature type="repeat" description="15">
    <location>
        <begin position="336"/>
        <end position="345"/>
    </location>
</feature>
<feature type="repeat" description="16">
    <location>
        <begin position="346"/>
        <end position="355"/>
    </location>
</feature>
<feature type="repeat" description="17">
    <location>
        <begin position="356"/>
        <end position="365"/>
    </location>
</feature>
<feature type="repeat" description="18">
    <location>
        <begin position="366"/>
        <end position="375"/>
    </location>
</feature>
<feature type="repeat" description="19">
    <location>
        <begin position="376"/>
        <end position="385"/>
    </location>
</feature>
<feature type="repeat" description="20">
    <location>
        <begin position="386"/>
        <end position="395"/>
    </location>
</feature>
<feature type="repeat" description="21">
    <location>
        <begin position="396"/>
        <end position="405"/>
    </location>
</feature>
<feature type="repeat" description="22">
    <location>
        <begin position="406"/>
        <end position="415"/>
    </location>
</feature>
<feature type="repeat" description="23">
    <location>
        <begin position="416"/>
        <end position="425"/>
    </location>
</feature>
<feature type="repeat" description="24">
    <location>
        <begin position="426"/>
        <end position="435"/>
    </location>
</feature>
<feature type="repeat" description="25">
    <location>
        <begin position="436"/>
        <end position="445"/>
    </location>
</feature>
<feature type="repeat" description="26">
    <location>
        <begin position="446"/>
        <end position="455"/>
    </location>
</feature>
<feature type="repeat" description="27">
    <location>
        <begin position="456"/>
        <end position="465"/>
    </location>
</feature>
<feature type="repeat" description="28">
    <location>
        <begin position="466"/>
        <end position="475"/>
    </location>
</feature>
<feature type="repeat" description="29">
    <location>
        <begin position="476"/>
        <end position="485"/>
    </location>
</feature>
<feature type="repeat" description="30">
    <location>
        <begin position="486"/>
        <end position="495"/>
    </location>
</feature>
<feature type="repeat" description="31">
    <location>
        <begin position="496"/>
        <end position="505"/>
    </location>
</feature>
<feature type="repeat" description="32">
    <location>
        <begin position="506"/>
        <end position="515"/>
    </location>
</feature>
<feature type="repeat" description="33">
    <location>
        <begin position="516"/>
        <end position="525"/>
    </location>
</feature>
<feature type="repeat" description="34">
    <location>
        <begin position="527"/>
        <end position="536"/>
    </location>
</feature>
<feature type="repeat" description="35">
    <location>
        <begin position="537"/>
        <end position="546"/>
    </location>
</feature>
<feature type="repeat" description="36">
    <location>
        <begin position="547"/>
        <end position="556"/>
    </location>
</feature>
<feature type="repeat" description="37">
    <location>
        <begin position="557"/>
        <end position="566"/>
    </location>
</feature>
<feature type="repeat" description="38">
    <location>
        <begin position="567"/>
        <end position="576"/>
    </location>
</feature>
<feature type="repeat" description="39">
    <location>
        <begin position="577"/>
        <end position="586"/>
    </location>
</feature>
<feature type="repeat" description="40">
    <location>
        <begin position="587"/>
        <end position="596"/>
    </location>
</feature>
<feature type="repeat" description="41">
    <location>
        <begin position="597"/>
        <end position="606"/>
    </location>
</feature>
<feature type="repeat" description="42">
    <location>
        <begin position="607"/>
        <end position="616"/>
    </location>
</feature>
<feature type="repeat" description="43">
    <location>
        <begin position="617"/>
        <end position="626"/>
    </location>
</feature>
<feature type="repeat" description="44">
    <location>
        <begin position="628"/>
        <end position="637"/>
    </location>
</feature>
<feature type="repeat" description="45">
    <location>
        <begin position="638"/>
        <end position="647"/>
    </location>
</feature>
<feature type="repeat" description="46">
    <location>
        <begin position="648"/>
        <end position="657"/>
    </location>
</feature>
<feature type="repeat" description="47">
    <location>
        <begin position="658"/>
        <end position="667"/>
    </location>
</feature>
<feature type="repeat" description="48">
    <location>
        <begin position="668"/>
        <end position="677"/>
    </location>
</feature>
<feature type="repeat" description="49">
    <location>
        <begin position="678"/>
        <end position="687"/>
    </location>
</feature>
<feature type="repeat" description="50">
    <location>
        <begin position="688"/>
        <end position="697"/>
    </location>
</feature>
<feature type="repeat" description="51">
    <location>
        <begin position="698"/>
        <end position="707"/>
    </location>
</feature>
<feature type="repeat" description="52">
    <location>
        <begin position="708"/>
        <end position="717"/>
    </location>
</feature>
<feature type="repeat" description="53">
    <location>
        <begin position="718"/>
        <end position="727"/>
    </location>
</feature>
<feature type="repeat" description="54">
    <location>
        <begin position="729"/>
        <end position="738"/>
    </location>
</feature>
<feature type="repeat" description="55">
    <location>
        <begin position="739"/>
        <end position="748"/>
    </location>
</feature>
<feature type="repeat" description="56">
    <location>
        <begin position="749"/>
        <end position="758"/>
    </location>
</feature>
<feature type="repeat" description="57">
    <location>
        <begin position="759"/>
        <end position="768"/>
    </location>
</feature>
<feature type="repeat" description="58">
    <location>
        <begin position="769"/>
        <end position="778"/>
    </location>
</feature>
<feature type="repeat" description="59">
    <location>
        <begin position="779"/>
        <end position="788"/>
    </location>
</feature>
<feature type="repeat" description="60">
    <location>
        <begin position="789"/>
        <end position="798"/>
    </location>
</feature>
<feature type="repeat" description="61">
    <location>
        <begin position="799"/>
        <end position="808"/>
    </location>
</feature>
<feature type="region of interest" description="Disordered" evidence="4">
    <location>
        <begin position="44"/>
        <end position="88"/>
    </location>
</feature>
<feature type="region of interest" description="Disordered" evidence="4">
    <location>
        <begin position="114"/>
        <end position="150"/>
    </location>
</feature>
<feature type="region of interest" description="Disordered" evidence="4">
    <location>
        <begin position="172"/>
        <end position="849"/>
    </location>
</feature>
<feature type="region of interest" description="61 X 10 AA tandem repeats of [NSQ]-[NKQVGA]-[GSAQKRT]-[ASGDTK]-[KGTQSAV]-[KGAED]-[EQVGIPTDMA]-[EGVAS]-[AGVPETNS]-[AQNGPTVS]">
    <location>
        <begin position="196"/>
        <end position="808"/>
    </location>
</feature>
<feature type="region of interest" description="Disordered" evidence="4">
    <location>
        <begin position="1460"/>
        <end position="1481"/>
    </location>
</feature>
<feature type="region of interest" description="Disordered" evidence="4">
    <location>
        <begin position="1571"/>
        <end position="1605"/>
    </location>
</feature>
<feature type="compositionally biased region" description="Basic residues" evidence="4">
    <location>
        <begin position="52"/>
        <end position="63"/>
    </location>
</feature>
<feature type="compositionally biased region" description="Basic and acidic residues" evidence="4">
    <location>
        <begin position="64"/>
        <end position="88"/>
    </location>
</feature>
<feature type="compositionally biased region" description="Low complexity" evidence="4">
    <location>
        <begin position="197"/>
        <end position="208"/>
    </location>
</feature>
<feature type="compositionally biased region" description="Polar residues" evidence="4">
    <location>
        <begin position="224"/>
        <end position="258"/>
    </location>
</feature>
<feature type="compositionally biased region" description="Polar residues" evidence="4">
    <location>
        <begin position="274"/>
        <end position="338"/>
    </location>
</feature>
<feature type="compositionally biased region" description="Polar residues" evidence="4">
    <location>
        <begin position="354"/>
        <end position="378"/>
    </location>
</feature>
<feature type="compositionally biased region" description="Polar residues" evidence="4">
    <location>
        <begin position="385"/>
        <end position="399"/>
    </location>
</feature>
<feature type="compositionally biased region" description="Basic and acidic residues" evidence="4">
    <location>
        <begin position="420"/>
        <end position="433"/>
    </location>
</feature>
<feature type="compositionally biased region" description="Polar residues" evidence="4">
    <location>
        <begin position="435"/>
        <end position="479"/>
    </location>
</feature>
<feature type="compositionally biased region" description="Polar residues" evidence="4">
    <location>
        <begin position="495"/>
        <end position="519"/>
    </location>
</feature>
<feature type="compositionally biased region" description="Polar residues" evidence="4">
    <location>
        <begin position="526"/>
        <end position="540"/>
    </location>
</feature>
<feature type="compositionally biased region" description="Basic and acidic residues" evidence="4">
    <location>
        <begin position="561"/>
        <end position="574"/>
    </location>
</feature>
<feature type="compositionally biased region" description="Polar residues" evidence="4">
    <location>
        <begin position="576"/>
        <end position="720"/>
    </location>
</feature>
<feature type="compositionally biased region" description="Polar residues" evidence="4">
    <location>
        <begin position="736"/>
        <end position="769"/>
    </location>
</feature>
<feature type="compositionally biased region" description="Polar residues" evidence="4">
    <location>
        <begin position="811"/>
        <end position="821"/>
    </location>
</feature>
<feature type="compositionally biased region" description="Basic and acidic residues" evidence="4">
    <location>
        <begin position="1576"/>
        <end position="1598"/>
    </location>
</feature>
<feature type="modified residue" description="Phosphoserine" evidence="9">
    <location>
        <position position="111"/>
    </location>
</feature>
<feature type="modified residue" description="Phosphoserine" evidence="9">
    <location>
        <position position="159"/>
    </location>
</feature>
<feature type="modified residue" description="Phosphoserine" evidence="9">
    <location>
        <position position="165"/>
    </location>
</feature>
<feature type="modified residue" description="Phosphoserine" evidence="2">
    <location>
        <position position="786"/>
    </location>
</feature>
<feature type="modified residue" description="Phosphoserine" evidence="2">
    <location>
        <position position="818"/>
    </location>
</feature>
<feature type="modified residue" description="N6-acetyllysine" evidence="10">
    <location>
        <position position="1135"/>
    </location>
</feature>
<feature type="modified residue" description="Phosphoserine" evidence="9">
    <location>
        <position position="1162"/>
    </location>
</feature>
<feature type="modified residue" description="Phosphoserine" evidence="2">
    <location>
        <position position="1178"/>
    </location>
</feature>
<feature type="cross-link" description="Glycyl lysine isopeptide (Lys-Gly) (interchain with G-Cter in SUMO2)" evidence="2">
    <location>
        <position position="148"/>
    </location>
</feature>
<feature type="cross-link" description="Glycyl lysine isopeptide (Lys-Gly) (interchain with G-Cter in SUMO1)" evidence="2">
    <location>
        <position position="823"/>
    </location>
</feature>
<feature type="splice variant" id="VSP_003952" description="In isoform RRp0." evidence="6">
    <location>
        <begin position="177"/>
        <end position="809"/>
    </location>
</feature>
<feature type="splice variant" id="VSP_003951" description="In isoform RRp1.8." evidence="6">
    <location>
        <begin position="177"/>
        <end position="789"/>
    </location>
</feature>
<feature type="splice variant" id="VSP_003953" description="In isoform RRp2." evidence="6">
    <location>
        <begin position="196"/>
        <end position="787"/>
    </location>
</feature>
<feature type="splice variant" id="VSP_003955" description="In isoform RRp15b." evidence="6">
    <location>
        <begin position="205"/>
        <end position="666"/>
    </location>
</feature>
<feature type="splice variant" id="VSP_003954" description="In isoform RRp16.8." evidence="6">
    <location>
        <begin position="205"/>
        <end position="626"/>
    </location>
</feature>
<feature type="splice variant" id="VSP_003957" description="In isoform RRp5.4." evidence="6">
    <location>
        <begin position="209"/>
        <end position="766"/>
    </location>
</feature>
<feature type="splice variant" id="VSP_003956" description="In isoform RRp10." evidence="6">
    <location>
        <begin position="209"/>
        <end position="720"/>
    </location>
</feature>
<feature type="splice variant" id="VSP_003958" description="In isoform RRp15a." evidence="6">
    <location>
        <begin position="269"/>
        <end position="730"/>
    </location>
</feature>
<feature type="splice variant" id="VSP_003959" description="In isoform RRp47." evidence="6 7">
    <location>
        <begin position="309"/>
        <end position="449"/>
    </location>
</feature>
<feature type="splice variant" id="VSP_003961" description="In isoform RRp41." evidence="6">
    <location>
        <begin position="466"/>
        <end position="666"/>
    </location>
</feature>
<feature type="splice variant" id="VSP_003962" description="In isoform RRp16.8." evidence="6">
    <location>
        <begin position="717"/>
        <end position="738"/>
    </location>
</feature>
<feature type="splice variant" id="VSP_003963" description="In isoform RRp61, isoform RRp1.8, isoform RRp0, isoform RRp2, isoform RRp16.8, isoform RRp15b, isoform RRp10, isoform RRp5.4, isoform RRp15a, isoform RRp47 and isoform RRp41." evidence="6 7">
    <original>GP</original>
    <variation>VC</variation>
    <location>
        <begin position="841"/>
        <end position="842"/>
    </location>
</feature>
<feature type="splice variant" id="VSP_003964" description="In isoform RRp61, isoform RRp1.8, isoform RRp0, isoform RRp2, isoform RRp16.8, isoform RRp15b, isoform RRp10, isoform RRp5.4, isoform RRp15a, isoform RRp47 and isoform RRp41." evidence="6 7">
    <location>
        <begin position="843"/>
        <end position="1605"/>
    </location>
</feature>
<feature type="sequence conflict" description="In Ref. 1; AAK11965." evidence="8" ref="1">
    <original>A</original>
    <variation>G</variation>
    <location>
        <position position="670"/>
    </location>
</feature>
<feature type="sequence conflict" description="In Ref. 1; AAK11967." evidence="8" ref="1">
    <original>G</original>
    <variation>S</variation>
    <location>
        <position position="700"/>
    </location>
</feature>
<dbReference type="EMBL" id="AF273683">
    <property type="protein sequence ID" value="AAK11963.1"/>
    <property type="molecule type" value="mRNA"/>
</dbReference>
<dbReference type="EMBL" id="AF273684">
    <property type="protein sequence ID" value="AAK11964.1"/>
    <property type="molecule type" value="mRNA"/>
</dbReference>
<dbReference type="EMBL" id="AF273685">
    <property type="protein sequence ID" value="AAK11965.1"/>
    <property type="molecule type" value="mRNA"/>
</dbReference>
<dbReference type="EMBL" id="AF273686">
    <property type="protein sequence ID" value="AAK11966.1"/>
    <property type="molecule type" value="mRNA"/>
</dbReference>
<dbReference type="EMBL" id="AF273687">
    <property type="protein sequence ID" value="AAK11967.1"/>
    <property type="molecule type" value="mRNA"/>
</dbReference>
<dbReference type="EMBL" id="AF273688">
    <property type="protein sequence ID" value="AAK11968.1"/>
    <property type="molecule type" value="mRNA"/>
</dbReference>
<dbReference type="EMBL" id="AF273689">
    <property type="protein sequence ID" value="AAK11969.1"/>
    <property type="molecule type" value="mRNA"/>
</dbReference>
<dbReference type="EMBL" id="AF273690">
    <property type="protein sequence ID" value="AAK11970.1"/>
    <property type="molecule type" value="mRNA"/>
</dbReference>
<dbReference type="EMBL" id="AF273691">
    <property type="protein sequence ID" value="AAK11971.1"/>
    <property type="molecule type" value="mRNA"/>
</dbReference>
<dbReference type="EMBL" id="AF273692">
    <property type="protein sequence ID" value="AAK11972.1"/>
    <property type="molecule type" value="mRNA"/>
</dbReference>
<dbReference type="EMBL" id="AF273693">
    <property type="protein sequence ID" value="AAK11973.1"/>
    <property type="molecule type" value="mRNA"/>
</dbReference>
<dbReference type="EMBL" id="AL929550">
    <property type="status" value="NOT_ANNOTATED_CDS"/>
    <property type="molecule type" value="Genomic_DNA"/>
</dbReference>
<dbReference type="EMBL" id="BC031452">
    <property type="protein sequence ID" value="AAH31452.1"/>
    <property type="molecule type" value="mRNA"/>
</dbReference>
<dbReference type="EMBL" id="AK019964">
    <property type="protein sequence ID" value="BAB31939.1"/>
    <property type="molecule type" value="mRNA"/>
</dbReference>
<dbReference type="CCDS" id="CCDS38253.1">
    <molecule id="Q99PL5-3"/>
</dbReference>
<dbReference type="RefSeq" id="NP_077243.2">
    <property type="nucleotide sequence ID" value="NM_024281.2"/>
</dbReference>
<dbReference type="RefSeq" id="NP_598329.1">
    <molecule id="Q99PL5-3"/>
    <property type="nucleotide sequence ID" value="NM_133626.2"/>
</dbReference>
<dbReference type="SMR" id="Q99PL5"/>
<dbReference type="BioGRID" id="219905">
    <property type="interactions" value="252"/>
</dbReference>
<dbReference type="FunCoup" id="Q99PL5">
    <property type="interactions" value="1162"/>
</dbReference>
<dbReference type="IntAct" id="Q99PL5">
    <property type="interactions" value="223"/>
</dbReference>
<dbReference type="MINT" id="Q99PL5"/>
<dbReference type="STRING" id="10090.ENSMUSP00000016072"/>
<dbReference type="GlyGen" id="Q99PL5">
    <property type="glycosylation" value="5 sites, 2 N-linked glycans (2 sites), 1 O-linked glycan (2 sites)"/>
</dbReference>
<dbReference type="iPTMnet" id="Q99PL5"/>
<dbReference type="PhosphoSitePlus" id="Q99PL5"/>
<dbReference type="SwissPalm" id="Q99PL5"/>
<dbReference type="jPOST" id="Q99PL5"/>
<dbReference type="PaxDb" id="10090-ENSMUSP00000016072"/>
<dbReference type="PeptideAtlas" id="Q99PL5"/>
<dbReference type="ProteomicsDB" id="299882">
    <molecule id="Q99PL5-1"/>
</dbReference>
<dbReference type="ProteomicsDB" id="299883">
    <molecule id="Q99PL5-2"/>
</dbReference>
<dbReference type="ProteomicsDB" id="299884">
    <molecule id="Q99PL5-3"/>
</dbReference>
<dbReference type="ProteomicsDB" id="299885">
    <molecule id="Q99PL5-4"/>
</dbReference>
<dbReference type="ProteomicsDB" id="299886">
    <molecule id="Q99PL5-5"/>
</dbReference>
<dbReference type="ProteomicsDB" id="299887">
    <molecule id="Q99PL5-6"/>
</dbReference>
<dbReference type="ProteomicsDB" id="299888">
    <molecule id="Q99PL5-7"/>
</dbReference>
<dbReference type="ProteomicsDB" id="299889">
    <molecule id="Q99PL5-8"/>
</dbReference>
<dbReference type="ProteomicsDB" id="299890">
    <molecule id="Q99PL5-9"/>
</dbReference>
<dbReference type="ProteomicsDB" id="299891">
    <molecule id="Q99PL5-10"/>
</dbReference>
<dbReference type="ProteomicsDB" id="299892">
    <molecule id="Q99PL5-11"/>
</dbReference>
<dbReference type="ProteomicsDB" id="299893">
    <molecule id="Q99PL5-12"/>
</dbReference>
<dbReference type="Pumba" id="Q99PL5"/>
<dbReference type="Antibodypedia" id="2409">
    <property type="antibodies" value="248 antibodies from 30 providers"/>
</dbReference>
<dbReference type="DNASU" id="81910"/>
<dbReference type="Ensembl" id="ENSMUST00000037875.6">
    <molecule id="Q99PL5-3"/>
    <property type="protein sequence ID" value="ENSMUSP00000040560.6"/>
    <property type="gene ID" value="ENSMUSG00000027422.16"/>
</dbReference>
<dbReference type="GeneID" id="81910"/>
<dbReference type="KEGG" id="mmu:81910"/>
<dbReference type="UCSC" id="uc008mqk.1">
    <molecule id="Q99PL5-3"/>
    <property type="organism name" value="mouse"/>
</dbReference>
<dbReference type="UCSC" id="uc008mql.1">
    <molecule id="Q99PL5-12"/>
    <property type="organism name" value="mouse"/>
</dbReference>
<dbReference type="UCSC" id="uc008mqm.1">
    <molecule id="Q99PL5-11"/>
    <property type="organism name" value="mouse"/>
</dbReference>
<dbReference type="AGR" id="MGI:1932395"/>
<dbReference type="CTD" id="6238"/>
<dbReference type="MGI" id="MGI:1932395">
    <property type="gene designation" value="Rrbp1"/>
</dbReference>
<dbReference type="VEuPathDB" id="HostDB:ENSMUSG00000027422"/>
<dbReference type="eggNOG" id="ENOG502QV05">
    <property type="taxonomic scope" value="Eukaryota"/>
</dbReference>
<dbReference type="GeneTree" id="ENSGT00940000158015"/>
<dbReference type="HOGENOM" id="CLU_393262_0_0_1"/>
<dbReference type="InParanoid" id="Q99PL5"/>
<dbReference type="OrthoDB" id="6410656at2759"/>
<dbReference type="PhylomeDB" id="Q99PL5"/>
<dbReference type="BioGRID-ORCS" id="81910">
    <property type="hits" value="2 hits in 77 CRISPR screens"/>
</dbReference>
<dbReference type="ChiTaRS" id="Rrbp1">
    <property type="organism name" value="mouse"/>
</dbReference>
<dbReference type="PRO" id="PR:Q99PL5"/>
<dbReference type="Proteomes" id="UP000000589">
    <property type="component" value="Chromosome 2"/>
</dbReference>
<dbReference type="RNAct" id="Q99PL5">
    <property type="molecule type" value="protein"/>
</dbReference>
<dbReference type="Bgee" id="ENSMUSG00000027422">
    <property type="expression patterns" value="Expressed in parotid gland and 260 other cell types or tissues"/>
</dbReference>
<dbReference type="ExpressionAtlas" id="Q99PL5">
    <property type="expression patterns" value="baseline and differential"/>
</dbReference>
<dbReference type="GO" id="GO:0005789">
    <property type="term" value="C:endoplasmic reticulum membrane"/>
    <property type="evidence" value="ECO:0000250"/>
    <property type="project" value="UniProtKB"/>
</dbReference>
<dbReference type="GO" id="GO:0015031">
    <property type="term" value="P:protein transport"/>
    <property type="evidence" value="ECO:0007669"/>
    <property type="project" value="UniProtKB-KW"/>
</dbReference>
<dbReference type="GO" id="GO:0007165">
    <property type="term" value="P:signal transduction"/>
    <property type="evidence" value="ECO:0000250"/>
    <property type="project" value="UniProtKB"/>
</dbReference>
<dbReference type="FunFam" id="1.10.287.1490:FF:000010">
    <property type="entry name" value="Ribosome binding protein 1"/>
    <property type="match status" value="1"/>
</dbReference>
<dbReference type="InterPro" id="IPR007794">
    <property type="entry name" value="Rib_rcpt_KP"/>
</dbReference>
<dbReference type="InterPro" id="IPR040248">
    <property type="entry name" value="RRBP1"/>
</dbReference>
<dbReference type="PANTHER" id="PTHR18939">
    <property type="entry name" value="RIBOSOME BINDING PROTEIN-1"/>
    <property type="match status" value="1"/>
</dbReference>
<dbReference type="PANTHER" id="PTHR18939:SF4">
    <property type="entry name" value="RIBOSOME-BINDING PROTEIN 1"/>
    <property type="match status" value="1"/>
</dbReference>
<dbReference type="Pfam" id="PF05104">
    <property type="entry name" value="Rib_recp_KP_reg"/>
    <property type="match status" value="2"/>
</dbReference>
<name>RRBP1_MOUSE</name>
<reference key="1">
    <citation type="journal article" date="2000" name="Gene">
        <title>Identification and characterization of multiple isoforms of a mouse ribosome receptor.</title>
        <authorList>
            <person name="Kim Y.-J."/>
            <person name="Lee M.-C."/>
            <person name="Kim S.-J."/>
            <person name="Chun J.-Y."/>
        </authorList>
    </citation>
    <scope>NUCLEOTIDE SEQUENCE [MRNA] (ISOFORMS RRP61; RRP47; RRP41; RRP16.8; RRP15A; RRP15B; RRP10; RRP5.4; RRP2; RRP1.8 AND RRP0)</scope>
    <scope>TISSUE SPECIFICITY</scope>
    <source>
        <strain>ICR</strain>
        <tissue>Embryo</tissue>
    </source>
</reference>
<reference key="2">
    <citation type="journal article" date="2009" name="PLoS Biol.">
        <title>Lineage-specific biology revealed by a finished genome assembly of the mouse.</title>
        <authorList>
            <person name="Church D.M."/>
            <person name="Goodstadt L."/>
            <person name="Hillier L.W."/>
            <person name="Zody M.C."/>
            <person name="Goldstein S."/>
            <person name="She X."/>
            <person name="Bult C.J."/>
            <person name="Agarwala R."/>
            <person name="Cherry J.L."/>
            <person name="DiCuccio M."/>
            <person name="Hlavina W."/>
            <person name="Kapustin Y."/>
            <person name="Meric P."/>
            <person name="Maglott D."/>
            <person name="Birtle Z."/>
            <person name="Marques A.C."/>
            <person name="Graves T."/>
            <person name="Zhou S."/>
            <person name="Teague B."/>
            <person name="Potamousis K."/>
            <person name="Churas C."/>
            <person name="Place M."/>
            <person name="Herschleb J."/>
            <person name="Runnheim R."/>
            <person name="Forrest D."/>
            <person name="Amos-Landgraf J."/>
            <person name="Schwartz D.C."/>
            <person name="Cheng Z."/>
            <person name="Lindblad-Toh K."/>
            <person name="Eichler E.E."/>
            <person name="Ponting C.P."/>
        </authorList>
    </citation>
    <scope>NUCLEOTIDE SEQUENCE [LARGE SCALE GENOMIC DNA]</scope>
    <source>
        <strain>C57BL/6J</strain>
    </source>
</reference>
<reference key="3">
    <citation type="journal article" date="2004" name="Genome Res.">
        <title>The status, quality, and expansion of the NIH full-length cDNA project: the Mammalian Gene Collection (MGC).</title>
        <authorList>
            <consortium name="The MGC Project Team"/>
        </authorList>
    </citation>
    <scope>NUCLEOTIDE SEQUENCE [LARGE SCALE MRNA] (ISOFORM RRP47)</scope>
    <source>
        <tissue>Kidney</tissue>
    </source>
</reference>
<reference key="4">
    <citation type="journal article" date="2005" name="Science">
        <title>The transcriptional landscape of the mammalian genome.</title>
        <authorList>
            <person name="Carninci P."/>
            <person name="Kasukawa T."/>
            <person name="Katayama S."/>
            <person name="Gough J."/>
            <person name="Frith M.C."/>
            <person name="Maeda N."/>
            <person name="Oyama R."/>
            <person name="Ravasi T."/>
            <person name="Lenhard B."/>
            <person name="Wells C."/>
            <person name="Kodzius R."/>
            <person name="Shimokawa K."/>
            <person name="Bajic V.B."/>
            <person name="Brenner S.E."/>
            <person name="Batalov S."/>
            <person name="Forrest A.R."/>
            <person name="Zavolan M."/>
            <person name="Davis M.J."/>
            <person name="Wilming L.G."/>
            <person name="Aidinis V."/>
            <person name="Allen J.E."/>
            <person name="Ambesi-Impiombato A."/>
            <person name="Apweiler R."/>
            <person name="Aturaliya R.N."/>
            <person name="Bailey T.L."/>
            <person name="Bansal M."/>
            <person name="Baxter L."/>
            <person name="Beisel K.W."/>
            <person name="Bersano T."/>
            <person name="Bono H."/>
            <person name="Chalk A.M."/>
            <person name="Chiu K.P."/>
            <person name="Choudhary V."/>
            <person name="Christoffels A."/>
            <person name="Clutterbuck D.R."/>
            <person name="Crowe M.L."/>
            <person name="Dalla E."/>
            <person name="Dalrymple B.P."/>
            <person name="de Bono B."/>
            <person name="Della Gatta G."/>
            <person name="di Bernardo D."/>
            <person name="Down T."/>
            <person name="Engstrom P."/>
            <person name="Fagiolini M."/>
            <person name="Faulkner G."/>
            <person name="Fletcher C.F."/>
            <person name="Fukushima T."/>
            <person name="Furuno M."/>
            <person name="Futaki S."/>
            <person name="Gariboldi M."/>
            <person name="Georgii-Hemming P."/>
            <person name="Gingeras T.R."/>
            <person name="Gojobori T."/>
            <person name="Green R.E."/>
            <person name="Gustincich S."/>
            <person name="Harbers M."/>
            <person name="Hayashi Y."/>
            <person name="Hensch T.K."/>
            <person name="Hirokawa N."/>
            <person name="Hill D."/>
            <person name="Huminiecki L."/>
            <person name="Iacono M."/>
            <person name="Ikeo K."/>
            <person name="Iwama A."/>
            <person name="Ishikawa T."/>
            <person name="Jakt M."/>
            <person name="Kanapin A."/>
            <person name="Katoh M."/>
            <person name="Kawasawa Y."/>
            <person name="Kelso J."/>
            <person name="Kitamura H."/>
            <person name="Kitano H."/>
            <person name="Kollias G."/>
            <person name="Krishnan S.P."/>
            <person name="Kruger A."/>
            <person name="Kummerfeld S.K."/>
            <person name="Kurochkin I.V."/>
            <person name="Lareau L.F."/>
            <person name="Lazarevic D."/>
            <person name="Lipovich L."/>
            <person name="Liu J."/>
            <person name="Liuni S."/>
            <person name="McWilliam S."/>
            <person name="Madan Babu M."/>
            <person name="Madera M."/>
            <person name="Marchionni L."/>
            <person name="Matsuda H."/>
            <person name="Matsuzawa S."/>
            <person name="Miki H."/>
            <person name="Mignone F."/>
            <person name="Miyake S."/>
            <person name="Morris K."/>
            <person name="Mottagui-Tabar S."/>
            <person name="Mulder N."/>
            <person name="Nakano N."/>
            <person name="Nakauchi H."/>
            <person name="Ng P."/>
            <person name="Nilsson R."/>
            <person name="Nishiguchi S."/>
            <person name="Nishikawa S."/>
            <person name="Nori F."/>
            <person name="Ohara O."/>
            <person name="Okazaki Y."/>
            <person name="Orlando V."/>
            <person name="Pang K.C."/>
            <person name="Pavan W.J."/>
            <person name="Pavesi G."/>
            <person name="Pesole G."/>
            <person name="Petrovsky N."/>
            <person name="Piazza S."/>
            <person name="Reed J."/>
            <person name="Reid J.F."/>
            <person name="Ring B.Z."/>
            <person name="Ringwald M."/>
            <person name="Rost B."/>
            <person name="Ruan Y."/>
            <person name="Salzberg S.L."/>
            <person name="Sandelin A."/>
            <person name="Schneider C."/>
            <person name="Schoenbach C."/>
            <person name="Sekiguchi K."/>
            <person name="Semple C.A."/>
            <person name="Seno S."/>
            <person name="Sessa L."/>
            <person name="Sheng Y."/>
            <person name="Shibata Y."/>
            <person name="Shimada H."/>
            <person name="Shimada K."/>
            <person name="Silva D."/>
            <person name="Sinclair B."/>
            <person name="Sperling S."/>
            <person name="Stupka E."/>
            <person name="Sugiura K."/>
            <person name="Sultana R."/>
            <person name="Takenaka Y."/>
            <person name="Taki K."/>
            <person name="Tammoja K."/>
            <person name="Tan S.L."/>
            <person name="Tang S."/>
            <person name="Taylor M.S."/>
            <person name="Tegner J."/>
            <person name="Teichmann S.A."/>
            <person name="Ueda H.R."/>
            <person name="van Nimwegen E."/>
            <person name="Verardo R."/>
            <person name="Wei C.L."/>
            <person name="Yagi K."/>
            <person name="Yamanishi H."/>
            <person name="Zabarovsky E."/>
            <person name="Zhu S."/>
            <person name="Zimmer A."/>
            <person name="Hide W."/>
            <person name="Bult C."/>
            <person name="Grimmond S.M."/>
            <person name="Teasdale R.D."/>
            <person name="Liu E.T."/>
            <person name="Brusic V."/>
            <person name="Quackenbush J."/>
            <person name="Wahlestedt C."/>
            <person name="Mattick J.S."/>
            <person name="Hume D.A."/>
            <person name="Kai C."/>
            <person name="Sasaki D."/>
            <person name="Tomaru Y."/>
            <person name="Fukuda S."/>
            <person name="Kanamori-Katayama M."/>
            <person name="Suzuki M."/>
            <person name="Aoki J."/>
            <person name="Arakawa T."/>
            <person name="Iida J."/>
            <person name="Imamura K."/>
            <person name="Itoh M."/>
            <person name="Kato T."/>
            <person name="Kawaji H."/>
            <person name="Kawagashira N."/>
            <person name="Kawashima T."/>
            <person name="Kojima M."/>
            <person name="Kondo S."/>
            <person name="Konno H."/>
            <person name="Nakano K."/>
            <person name="Ninomiya N."/>
            <person name="Nishio T."/>
            <person name="Okada M."/>
            <person name="Plessy C."/>
            <person name="Shibata K."/>
            <person name="Shiraki T."/>
            <person name="Suzuki S."/>
            <person name="Tagami M."/>
            <person name="Waki K."/>
            <person name="Watahiki A."/>
            <person name="Okamura-Oho Y."/>
            <person name="Suzuki H."/>
            <person name="Kawai J."/>
            <person name="Hayashizaki Y."/>
        </authorList>
    </citation>
    <scope>NUCLEOTIDE SEQUENCE [LARGE SCALE MRNA] OF 736-1605 (ISOFORM 3)</scope>
    <source>
        <strain>C57BL/6J</strain>
        <tissue>Embryo</tissue>
    </source>
</reference>
<reference key="5">
    <citation type="journal article" date="2008" name="J. Proteome Res.">
        <title>Specific phosphopeptide enrichment with immobilized titanium ion affinity chromatography adsorbent for phosphoproteome analysis.</title>
        <authorList>
            <person name="Zhou H."/>
            <person name="Ye M."/>
            <person name="Dong J."/>
            <person name="Han G."/>
            <person name="Jiang X."/>
            <person name="Wu R."/>
            <person name="Zou H."/>
        </authorList>
    </citation>
    <scope>IDENTIFICATION BY MASS SPECTROMETRY [LARGE SCALE ANALYSIS]</scope>
    <source>
        <tissue>Liver</tissue>
    </source>
</reference>
<reference key="6">
    <citation type="journal article" date="2010" name="Cell">
        <title>A tissue-specific atlas of mouse protein phosphorylation and expression.</title>
        <authorList>
            <person name="Huttlin E.L."/>
            <person name="Jedrychowski M.P."/>
            <person name="Elias J.E."/>
            <person name="Goswami T."/>
            <person name="Rad R."/>
            <person name="Beausoleil S.A."/>
            <person name="Villen J."/>
            <person name="Haas W."/>
            <person name="Sowa M.E."/>
            <person name="Gygi S.P."/>
        </authorList>
    </citation>
    <scope>PHOSPHORYLATION [LARGE SCALE ANALYSIS] AT SER-111; SER-159; SER-165 AND SER-1162</scope>
    <scope>IDENTIFICATION BY MASS SPECTROMETRY [LARGE SCALE ANALYSIS]</scope>
    <source>
        <tissue>Brain</tissue>
        <tissue>Brown adipose tissue</tissue>
        <tissue>Heart</tissue>
        <tissue>Kidney</tissue>
        <tissue>Liver</tissue>
        <tissue>Lung</tissue>
        <tissue>Pancreas</tissue>
        <tissue>Spleen</tissue>
        <tissue>Testis</tissue>
    </source>
</reference>
<reference key="7">
    <citation type="journal article" date="2013" name="Mol. Cell">
        <title>SIRT5-mediated lysine desuccinylation impacts diverse metabolic pathways.</title>
        <authorList>
            <person name="Park J."/>
            <person name="Chen Y."/>
            <person name="Tishkoff D.X."/>
            <person name="Peng C."/>
            <person name="Tan M."/>
            <person name="Dai L."/>
            <person name="Xie Z."/>
            <person name="Zhang Y."/>
            <person name="Zwaans B.M."/>
            <person name="Skinner M.E."/>
            <person name="Lombard D.B."/>
            <person name="Zhao Y."/>
        </authorList>
    </citation>
    <scope>ACETYLATION [LARGE SCALE ANALYSIS] AT LYS-1135</scope>
    <scope>IDENTIFICATION BY MASS SPECTROMETRY [LARGE SCALE ANALYSIS]</scope>
    <source>
        <tissue>Embryonic fibroblast</tissue>
    </source>
</reference>
<organism>
    <name type="scientific">Mus musculus</name>
    <name type="common">Mouse</name>
    <dbReference type="NCBI Taxonomy" id="10090"/>
    <lineage>
        <taxon>Eukaryota</taxon>
        <taxon>Metazoa</taxon>
        <taxon>Chordata</taxon>
        <taxon>Craniata</taxon>
        <taxon>Vertebrata</taxon>
        <taxon>Euteleostomi</taxon>
        <taxon>Mammalia</taxon>
        <taxon>Eutheria</taxon>
        <taxon>Euarchontoglires</taxon>
        <taxon>Glires</taxon>
        <taxon>Rodentia</taxon>
        <taxon>Myomorpha</taxon>
        <taxon>Muroidea</taxon>
        <taxon>Muridae</taxon>
        <taxon>Murinae</taxon>
        <taxon>Mus</taxon>
        <taxon>Mus</taxon>
    </lineage>
</organism>
<comment type="function">
    <text evidence="1">Acts as a ribosome receptor and mediates interaction between the ribosome and the endoplasmic reticulum membrane.</text>
</comment>
<comment type="subcellular location">
    <subcellularLocation>
        <location evidence="1">Endoplasmic reticulum membrane</location>
        <topology evidence="1">Single-pass type III membrane protein</topology>
    </subcellularLocation>
</comment>
<comment type="alternative products">
    <event type="alternative splicing"/>
    <isoform>
        <id>Q99PL5-1</id>
        <name>3</name>
        <sequence type="displayed"/>
    </isoform>
    <isoform>
        <id>Q99PL5-2</id>
        <name>RRp61</name>
        <name>p180</name>
        <sequence type="described" ref="VSP_003963 VSP_003964"/>
    </isoform>
    <isoform>
        <id>Q99PL5-3</id>
        <name>RRp47</name>
        <sequence type="described" ref="VSP_003959 VSP_003963 VSP_003964"/>
    </isoform>
    <isoform>
        <id>Q99PL5-4</id>
        <name>RRp41</name>
        <sequence type="described" ref="VSP_003961 VSP_003963 VSP_003964"/>
    </isoform>
    <isoform>
        <id>Q99PL5-5</id>
        <name>RRp16.8</name>
        <sequence type="described" ref="VSP_003954 VSP_003962 VSP_003963 VSP_003964"/>
    </isoform>
    <isoform>
        <id>Q99PL5-6</id>
        <name>RRp15a</name>
        <sequence type="described" ref="VSP_003958 VSP_003963 VSP_003964"/>
    </isoform>
    <isoform>
        <id>Q99PL5-7</id>
        <name>RRp15b</name>
        <sequence type="described" ref="VSP_003955 VSP_003963 VSP_003964"/>
    </isoform>
    <isoform>
        <id>Q99PL5-8</id>
        <name>RRp10</name>
        <sequence type="described" ref="VSP_003956 VSP_003963 VSP_003964"/>
    </isoform>
    <isoform>
        <id>Q99PL5-9</id>
        <name>RRp5.4</name>
        <sequence type="described" ref="VSP_003957 VSP_003963 VSP_003964"/>
    </isoform>
    <isoform>
        <id>Q99PL5-10</id>
        <name>RRp2</name>
        <sequence type="described" ref="VSP_003953 VSP_003963 VSP_003964"/>
    </isoform>
    <isoform>
        <id>Q99PL5-11</id>
        <name>RRp1.8</name>
        <sequence type="described" ref="VSP_003951 VSP_003963 VSP_003964"/>
    </isoform>
    <isoform>
        <id>Q99PL5-12</id>
        <name>RRp0</name>
        <name>ES130</name>
        <sequence type="described" ref="VSP_003952 VSP_003963 VSP_003964"/>
    </isoform>
    <text>Additional isoforms seem to exist.</text>
</comment>
<comment type="tissue specificity">
    <text evidence="5">Widely expressed.</text>
</comment>